<comment type="function">
    <text evidence="1">Secreted subtilisin-like serine protease with keratinolytic activity that contributes to pathogenicity.</text>
</comment>
<comment type="subcellular location">
    <subcellularLocation>
        <location evidence="1">Secreted</location>
    </subcellularLocation>
</comment>
<comment type="similarity">
    <text evidence="4">Belongs to the peptidase S8 family.</text>
</comment>
<dbReference type="EC" id="3.4.21.-"/>
<dbReference type="EMBL" id="ACFW01000001">
    <property type="protein sequence ID" value="EER29975.1"/>
    <property type="molecule type" value="Genomic_DNA"/>
</dbReference>
<dbReference type="RefSeq" id="XP_003072120.1">
    <property type="nucleotide sequence ID" value="XM_003072074.1"/>
</dbReference>
<dbReference type="SMR" id="C5NZT2"/>
<dbReference type="VEuPathDB" id="FungiDB:CPC735_012930"/>
<dbReference type="HOGENOM" id="CLU_011263_1_1_1"/>
<dbReference type="OrthoDB" id="206201at2759"/>
<dbReference type="Proteomes" id="UP000009084">
    <property type="component" value="Unassembled WGS sequence"/>
</dbReference>
<dbReference type="GO" id="GO:0005576">
    <property type="term" value="C:extracellular region"/>
    <property type="evidence" value="ECO:0007669"/>
    <property type="project" value="UniProtKB-SubCell"/>
</dbReference>
<dbReference type="GO" id="GO:0004252">
    <property type="term" value="F:serine-type endopeptidase activity"/>
    <property type="evidence" value="ECO:0007669"/>
    <property type="project" value="InterPro"/>
</dbReference>
<dbReference type="GO" id="GO:0006508">
    <property type="term" value="P:proteolysis"/>
    <property type="evidence" value="ECO:0007669"/>
    <property type="project" value="UniProtKB-KW"/>
</dbReference>
<dbReference type="CDD" id="cd04077">
    <property type="entry name" value="Peptidases_S8_PCSK9_ProteinaseK_like"/>
    <property type="match status" value="1"/>
</dbReference>
<dbReference type="FunFam" id="3.40.50.200:FF:000007">
    <property type="entry name" value="Subtilisin-like serine protease"/>
    <property type="match status" value="1"/>
</dbReference>
<dbReference type="Gene3D" id="3.30.70.80">
    <property type="entry name" value="Peptidase S8 propeptide/proteinase inhibitor I9"/>
    <property type="match status" value="1"/>
</dbReference>
<dbReference type="Gene3D" id="3.40.50.200">
    <property type="entry name" value="Peptidase S8/S53 domain"/>
    <property type="match status" value="1"/>
</dbReference>
<dbReference type="InterPro" id="IPR034193">
    <property type="entry name" value="PCSK9_ProteinaseK-like"/>
</dbReference>
<dbReference type="InterPro" id="IPR000209">
    <property type="entry name" value="Peptidase_S8/S53_dom"/>
</dbReference>
<dbReference type="InterPro" id="IPR036852">
    <property type="entry name" value="Peptidase_S8/S53_dom_sf"/>
</dbReference>
<dbReference type="InterPro" id="IPR023827">
    <property type="entry name" value="Peptidase_S8_Asp-AS"/>
</dbReference>
<dbReference type="InterPro" id="IPR022398">
    <property type="entry name" value="Peptidase_S8_His-AS"/>
</dbReference>
<dbReference type="InterPro" id="IPR050131">
    <property type="entry name" value="Peptidase_S8_subtilisin-like"/>
</dbReference>
<dbReference type="InterPro" id="IPR015500">
    <property type="entry name" value="Peptidase_S8_subtilisin-rel"/>
</dbReference>
<dbReference type="InterPro" id="IPR010259">
    <property type="entry name" value="S8pro/Inhibitor_I9"/>
</dbReference>
<dbReference type="InterPro" id="IPR037045">
    <property type="entry name" value="S8pro/Inhibitor_I9_sf"/>
</dbReference>
<dbReference type="PANTHER" id="PTHR43806:SF11">
    <property type="entry name" value="CEREVISIN-RELATED"/>
    <property type="match status" value="1"/>
</dbReference>
<dbReference type="PANTHER" id="PTHR43806">
    <property type="entry name" value="PEPTIDASE S8"/>
    <property type="match status" value="1"/>
</dbReference>
<dbReference type="Pfam" id="PF05922">
    <property type="entry name" value="Inhibitor_I9"/>
    <property type="match status" value="1"/>
</dbReference>
<dbReference type="Pfam" id="PF00082">
    <property type="entry name" value="Peptidase_S8"/>
    <property type="match status" value="1"/>
</dbReference>
<dbReference type="PRINTS" id="PR00723">
    <property type="entry name" value="SUBTILISIN"/>
</dbReference>
<dbReference type="SUPFAM" id="SSF54897">
    <property type="entry name" value="Protease propeptides/inhibitors"/>
    <property type="match status" value="1"/>
</dbReference>
<dbReference type="SUPFAM" id="SSF52743">
    <property type="entry name" value="Subtilisin-like"/>
    <property type="match status" value="1"/>
</dbReference>
<dbReference type="PROSITE" id="PS51892">
    <property type="entry name" value="SUBTILASE"/>
    <property type="match status" value="1"/>
</dbReference>
<dbReference type="PROSITE" id="PS00136">
    <property type="entry name" value="SUBTILASE_ASP"/>
    <property type="match status" value="1"/>
</dbReference>
<dbReference type="PROSITE" id="PS00137">
    <property type="entry name" value="SUBTILASE_HIS"/>
    <property type="match status" value="1"/>
</dbReference>
<feature type="signal peptide" evidence="2">
    <location>
        <begin position="1"/>
        <end position="20"/>
    </location>
</feature>
<feature type="propeptide" id="PRO_0000407014" evidence="1">
    <location>
        <begin position="21"/>
        <end position="118"/>
    </location>
</feature>
<feature type="chain" id="PRO_0000407015" description="Subtilisin-like protease CPC735_012930">
    <location>
        <begin position="119"/>
        <end position="377"/>
    </location>
</feature>
<feature type="domain" description="Inhibitor I9" evidence="2">
    <location>
        <begin position="36"/>
        <end position="114"/>
    </location>
</feature>
<feature type="domain" description="Peptidase S8" evidence="3">
    <location>
        <begin position="128"/>
        <end position="377"/>
    </location>
</feature>
<feature type="active site" description="Charge relay system" evidence="3">
    <location>
        <position position="160"/>
    </location>
</feature>
<feature type="active site" description="Charge relay system" evidence="3">
    <location>
        <position position="191"/>
    </location>
</feature>
<feature type="active site" description="Charge relay system" evidence="3">
    <location>
        <position position="323"/>
    </location>
</feature>
<feature type="glycosylation site" description="N-linked (GlcNAc...) asparagine" evidence="2">
    <location>
        <position position="252"/>
    </location>
</feature>
<feature type="glycosylation site" description="N-linked (GlcNAc...) asparagine" evidence="2">
    <location>
        <position position="364"/>
    </location>
</feature>
<feature type="glycosylation site" description="N-linked (GlcNAc...) asparagine" evidence="2">
    <location>
        <position position="373"/>
    </location>
</feature>
<name>SUB4B_COCP7</name>
<organism>
    <name type="scientific">Coccidioides posadasii (strain C735)</name>
    <name type="common">Valley fever fungus</name>
    <dbReference type="NCBI Taxonomy" id="222929"/>
    <lineage>
        <taxon>Eukaryota</taxon>
        <taxon>Fungi</taxon>
        <taxon>Dikarya</taxon>
        <taxon>Ascomycota</taxon>
        <taxon>Pezizomycotina</taxon>
        <taxon>Eurotiomycetes</taxon>
        <taxon>Eurotiomycetidae</taxon>
        <taxon>Onygenales</taxon>
        <taxon>Onygenaceae</taxon>
        <taxon>Coccidioides</taxon>
    </lineage>
</organism>
<protein>
    <recommendedName>
        <fullName>Subtilisin-like protease CPC735_012930</fullName>
        <ecNumber>3.4.21.-</ecNumber>
    </recommendedName>
</protein>
<proteinExistence type="inferred from homology"/>
<accession>C5NZT2</accession>
<evidence type="ECO:0000250" key="1"/>
<evidence type="ECO:0000255" key="2"/>
<evidence type="ECO:0000255" key="3">
    <source>
        <dbReference type="PROSITE-ProRule" id="PRU01240"/>
    </source>
</evidence>
<evidence type="ECO:0000305" key="4"/>
<reference key="1">
    <citation type="journal article" date="2009" name="Genome Res.">
        <title>Comparative genomic analyses of the human fungal pathogens Coccidioides and their relatives.</title>
        <authorList>
            <person name="Sharpton T.J."/>
            <person name="Stajich J.E."/>
            <person name="Rounsley S.D."/>
            <person name="Gardner M.J."/>
            <person name="Wortman J.R."/>
            <person name="Jordar V.S."/>
            <person name="Maiti R."/>
            <person name="Kodira C.D."/>
            <person name="Neafsey D.E."/>
            <person name="Zeng Q."/>
            <person name="Hung C.-Y."/>
            <person name="McMahan C."/>
            <person name="Muszewska A."/>
            <person name="Grynberg M."/>
            <person name="Mandel M.A."/>
            <person name="Kellner E.M."/>
            <person name="Barker B.M."/>
            <person name="Galgiani J.N."/>
            <person name="Orbach M.J."/>
            <person name="Kirkland T.N."/>
            <person name="Cole G.T."/>
            <person name="Henn M.R."/>
            <person name="Birren B.W."/>
            <person name="Taylor J.W."/>
        </authorList>
    </citation>
    <scope>NUCLEOTIDE SEQUENCE [LARGE SCALE GENOMIC DNA]</scope>
    <source>
        <strain>C735</strain>
    </source>
</reference>
<keyword id="KW-0325">Glycoprotein</keyword>
<keyword id="KW-0378">Hydrolase</keyword>
<keyword id="KW-0645">Protease</keyword>
<keyword id="KW-0964">Secreted</keyword>
<keyword id="KW-0720">Serine protease</keyword>
<keyword id="KW-0732">Signal</keyword>
<keyword id="KW-0843">Virulence</keyword>
<keyword id="KW-0865">Zymogen</keyword>
<sequence length="377" mass="40225">MSILFKIFASTLAVVSVVNAGELLNFENERDIIRGSYIVVMKDGTSSSDLKSHMNWAANVHHGNLAKQGPSRSIGFQFSFDIGGWRGYSGKFDNDTLNAIVNNAHVKYVEPDRMASATVLKIQKNAPSWGLGRISHTFRGFKNYLYHSSAGEGVLAYVVDTGIDINHPEFEGRAEWGINVVDEVDTDEHGHGTHVAGTIGSKTFGVAKKVKLVAVKALGKDSRGPDSGIIAAMDWAVKHAKERGILGKAIMNLSLTGDTATALNEAAERAVEEGLFLGVAAGNNNRDAINESPASVETVCTAGASAENDEKASFSNFGSLRTSMAAPHVCGVAALLMSSEGIKAQEACDRIKKLARPAIRNPGNSTTNKLLYNKSGF</sequence>
<gene>
    <name type="ORF">CPC735_012930</name>
</gene>